<name>YBEY_ECOBW</name>
<dbReference type="EC" id="3.1.-.-" evidence="1"/>
<dbReference type="EMBL" id="CP001396">
    <property type="protein sequence ID" value="ACR62281.1"/>
    <property type="molecule type" value="Genomic_DNA"/>
</dbReference>
<dbReference type="RefSeq" id="WP_000084469.1">
    <property type="nucleotide sequence ID" value="NC_012759.1"/>
</dbReference>
<dbReference type="SMR" id="C4ZWE6"/>
<dbReference type="GeneID" id="93776823"/>
<dbReference type="KEGG" id="ebw:BWG_0530"/>
<dbReference type="HOGENOM" id="CLU_106710_0_1_6"/>
<dbReference type="GO" id="GO:0005737">
    <property type="term" value="C:cytoplasm"/>
    <property type="evidence" value="ECO:0007669"/>
    <property type="project" value="UniProtKB-SubCell"/>
</dbReference>
<dbReference type="GO" id="GO:0004222">
    <property type="term" value="F:metalloendopeptidase activity"/>
    <property type="evidence" value="ECO:0007669"/>
    <property type="project" value="InterPro"/>
</dbReference>
<dbReference type="GO" id="GO:0004521">
    <property type="term" value="F:RNA endonuclease activity"/>
    <property type="evidence" value="ECO:0007669"/>
    <property type="project" value="UniProtKB-UniRule"/>
</dbReference>
<dbReference type="GO" id="GO:0008270">
    <property type="term" value="F:zinc ion binding"/>
    <property type="evidence" value="ECO:0007669"/>
    <property type="project" value="UniProtKB-UniRule"/>
</dbReference>
<dbReference type="GO" id="GO:0006364">
    <property type="term" value="P:rRNA processing"/>
    <property type="evidence" value="ECO:0007669"/>
    <property type="project" value="UniProtKB-UniRule"/>
</dbReference>
<dbReference type="FunFam" id="3.40.390.30:FF:000001">
    <property type="entry name" value="Endoribonuclease YbeY"/>
    <property type="match status" value="1"/>
</dbReference>
<dbReference type="Gene3D" id="3.40.390.30">
    <property type="entry name" value="Metalloproteases ('zincins'), catalytic domain"/>
    <property type="match status" value="1"/>
</dbReference>
<dbReference type="HAMAP" id="MF_00009">
    <property type="entry name" value="Endoribonucl_YbeY"/>
    <property type="match status" value="1"/>
</dbReference>
<dbReference type="InterPro" id="IPR023091">
    <property type="entry name" value="MetalPrtase_cat_dom_sf_prd"/>
</dbReference>
<dbReference type="InterPro" id="IPR002036">
    <property type="entry name" value="YbeY"/>
</dbReference>
<dbReference type="InterPro" id="IPR020549">
    <property type="entry name" value="YbeY_CS"/>
</dbReference>
<dbReference type="NCBIfam" id="TIGR00043">
    <property type="entry name" value="rRNA maturation RNase YbeY"/>
    <property type="match status" value="1"/>
</dbReference>
<dbReference type="PANTHER" id="PTHR46986">
    <property type="entry name" value="ENDORIBONUCLEASE YBEY, CHLOROPLASTIC"/>
    <property type="match status" value="1"/>
</dbReference>
<dbReference type="PANTHER" id="PTHR46986:SF1">
    <property type="entry name" value="ENDORIBONUCLEASE YBEY, CHLOROPLASTIC"/>
    <property type="match status" value="1"/>
</dbReference>
<dbReference type="Pfam" id="PF02130">
    <property type="entry name" value="YbeY"/>
    <property type="match status" value="1"/>
</dbReference>
<dbReference type="SUPFAM" id="SSF55486">
    <property type="entry name" value="Metalloproteases ('zincins'), catalytic domain"/>
    <property type="match status" value="1"/>
</dbReference>
<dbReference type="PROSITE" id="PS01306">
    <property type="entry name" value="UPF0054"/>
    <property type="match status" value="1"/>
</dbReference>
<accession>C4ZWE6</accession>
<gene>
    <name evidence="1" type="primary">ybeY</name>
    <name type="ordered locus">BWG_0530</name>
</gene>
<proteinExistence type="inferred from homology"/>
<protein>
    <recommendedName>
        <fullName evidence="1">Endoribonuclease YbeY</fullName>
        <ecNumber evidence="1">3.1.-.-</ecNumber>
    </recommendedName>
</protein>
<feature type="chain" id="PRO_1000201731" description="Endoribonuclease YbeY">
    <location>
        <begin position="1"/>
        <end position="155"/>
    </location>
</feature>
<feature type="binding site" evidence="1">
    <location>
        <position position="114"/>
    </location>
    <ligand>
        <name>Zn(2+)</name>
        <dbReference type="ChEBI" id="CHEBI:29105"/>
        <note>catalytic</note>
    </ligand>
</feature>
<feature type="binding site" evidence="1">
    <location>
        <position position="118"/>
    </location>
    <ligand>
        <name>Zn(2+)</name>
        <dbReference type="ChEBI" id="CHEBI:29105"/>
        <note>catalytic</note>
    </ligand>
</feature>
<feature type="binding site" evidence="1">
    <location>
        <position position="124"/>
    </location>
    <ligand>
        <name>Zn(2+)</name>
        <dbReference type="ChEBI" id="CHEBI:29105"/>
        <note>catalytic</note>
    </ligand>
</feature>
<reference key="1">
    <citation type="journal article" date="2009" name="J. Bacteriol.">
        <title>Genomic sequencing reveals regulatory mutations and recombinational events in the widely used MC4100 lineage of Escherichia coli K-12.</title>
        <authorList>
            <person name="Ferenci T."/>
            <person name="Zhou Z."/>
            <person name="Betteridge T."/>
            <person name="Ren Y."/>
            <person name="Liu Y."/>
            <person name="Feng L."/>
            <person name="Reeves P.R."/>
            <person name="Wang L."/>
        </authorList>
    </citation>
    <scope>NUCLEOTIDE SEQUENCE [LARGE SCALE GENOMIC DNA]</scope>
    <source>
        <strain>K12 / MC4100 / BW2952</strain>
    </source>
</reference>
<keyword id="KW-0963">Cytoplasm</keyword>
<keyword id="KW-0255">Endonuclease</keyword>
<keyword id="KW-0378">Hydrolase</keyword>
<keyword id="KW-0479">Metal-binding</keyword>
<keyword id="KW-0540">Nuclease</keyword>
<keyword id="KW-0690">Ribosome biogenesis</keyword>
<keyword id="KW-0698">rRNA processing</keyword>
<keyword id="KW-0862">Zinc</keyword>
<comment type="function">
    <text evidence="1">Single strand-specific metallo-endoribonuclease involved in late-stage 70S ribosome quality control and in maturation of the 3' terminus of the 16S rRNA.</text>
</comment>
<comment type="cofactor">
    <cofactor evidence="1">
        <name>Zn(2+)</name>
        <dbReference type="ChEBI" id="CHEBI:29105"/>
    </cofactor>
    <text evidence="1">Binds 1 zinc ion.</text>
</comment>
<comment type="subcellular location">
    <subcellularLocation>
        <location evidence="1">Cytoplasm</location>
    </subcellularLocation>
</comment>
<comment type="similarity">
    <text evidence="1">Belongs to the endoribonuclease YbeY family.</text>
</comment>
<evidence type="ECO:0000255" key="1">
    <source>
        <dbReference type="HAMAP-Rule" id="MF_00009"/>
    </source>
</evidence>
<sequence length="155" mass="17526">MSQVILDLQLACEDNSGLPEESQFQTWLNAVIPQFQEESEVTIRVVDTAESHSLNLTYRGKDKPTNVLSFPFEVPPGMEMSLLGDLVICRQVVEKEAQEQGKPLEAHWAHMVVHGSLHLLGYDHIEDDEAEEMEALETEIMLALGYEDPYIAEKE</sequence>
<organism>
    <name type="scientific">Escherichia coli (strain K12 / MC4100 / BW2952)</name>
    <dbReference type="NCBI Taxonomy" id="595496"/>
    <lineage>
        <taxon>Bacteria</taxon>
        <taxon>Pseudomonadati</taxon>
        <taxon>Pseudomonadota</taxon>
        <taxon>Gammaproteobacteria</taxon>
        <taxon>Enterobacterales</taxon>
        <taxon>Enterobacteriaceae</taxon>
        <taxon>Escherichia</taxon>
    </lineage>
</organism>